<evidence type="ECO:0000305" key="1"/>
<keyword id="KW-1185">Reference proteome</keyword>
<gene>
    <name type="primary">Lenep</name>
    <name type="synonym">Lep503</name>
</gene>
<proteinExistence type="evidence at transcript level"/>
<reference key="1">
    <citation type="journal article" date="1995" name="Exp. Eye Res.">
        <title>Lens epithelial cell mRNA. I. Cloning and sequencing of a messenger RNA with a basic motif/leucine-rich domain specifically expressed in rat lens epithelial cells.</title>
        <authorList>
            <person name="Wen Y."/>
            <person name="Li G.W."/>
            <person name="Chen P."/>
            <person name="Bekhor I."/>
        </authorList>
    </citation>
    <scope>NUCLEOTIDE SEQUENCE [MRNA]</scope>
    <source>
        <strain>Sprague-Dawley</strain>
        <tissue>Lens</tissue>
    </source>
</reference>
<reference key="2">
    <citation type="journal article" date="2000" name="Exp. Eye Res.">
        <title>A novel lens epithelium gene, LEP503, is highly conserved in different vertebrate species and is developmentally regulated in postnatal rat lens.</title>
        <authorList>
            <person name="Wen Y."/>
            <person name="Sachs G."/>
            <person name="Athmann C."/>
        </authorList>
    </citation>
    <scope>NUCLEOTIDE SEQUENCE [GENOMIC DNA]</scope>
    <source>
        <strain>Sprague-Dawley</strain>
    </source>
</reference>
<sequence>MKPPMQPLTQALPFSLRDALQGTGLRVPVIKMGTGWEGMYRTLKEVAYILLCCWCIKELLD</sequence>
<dbReference type="EMBL" id="U15149">
    <property type="protein sequence ID" value="AAA87067.1"/>
    <property type="molecule type" value="mRNA"/>
</dbReference>
<dbReference type="EMBL" id="AF144410">
    <property type="protein sequence ID" value="AAD38376.1"/>
    <property type="molecule type" value="Genomic_DNA"/>
</dbReference>
<dbReference type="RefSeq" id="NP_446066.2">
    <property type="nucleotide sequence ID" value="NM_053614.2"/>
</dbReference>
<dbReference type="FunCoup" id="Q9WVB7">
    <property type="interactions" value="1"/>
</dbReference>
<dbReference type="STRING" id="10116.ENSRNOP00000065837"/>
<dbReference type="PhosphoSitePlus" id="Q9WVB7"/>
<dbReference type="PaxDb" id="10116-ENSRNOP00000065837"/>
<dbReference type="Ensembl" id="ENSRNOT00000074920.3">
    <property type="protein sequence ID" value="ENSRNOP00000065837.1"/>
    <property type="gene ID" value="ENSRNOG00000049513.3"/>
</dbReference>
<dbReference type="GeneID" id="113917"/>
<dbReference type="KEGG" id="rno:113917"/>
<dbReference type="UCSC" id="RGD:69433">
    <property type="organism name" value="rat"/>
</dbReference>
<dbReference type="AGR" id="RGD:69433"/>
<dbReference type="CTD" id="55891"/>
<dbReference type="RGD" id="69433">
    <property type="gene designation" value="Lenep"/>
</dbReference>
<dbReference type="eggNOG" id="ENOG502SAUH">
    <property type="taxonomic scope" value="Eukaryota"/>
</dbReference>
<dbReference type="GeneTree" id="ENSGT00390000002996"/>
<dbReference type="HOGENOM" id="CLU_2921930_0_0_1"/>
<dbReference type="InParanoid" id="Q9WVB7"/>
<dbReference type="OMA" id="MQARTQP"/>
<dbReference type="OrthoDB" id="8727558at2759"/>
<dbReference type="PhylomeDB" id="Q9WVB7"/>
<dbReference type="PRO" id="PR:Q9WVB7"/>
<dbReference type="Proteomes" id="UP000002494">
    <property type="component" value="Chromosome 2"/>
</dbReference>
<dbReference type="Bgee" id="ENSRNOG00000049513">
    <property type="expression patterns" value="Expressed in thymus and 3 other cell types or tissues"/>
</dbReference>
<dbReference type="InterPro" id="IPR029194">
    <property type="entry name" value="LEP503"/>
</dbReference>
<dbReference type="PANTHER" id="PTHR16968">
    <property type="entry name" value="LENS EPITHELIAL CELL PROTEIN LEP503"/>
    <property type="match status" value="1"/>
</dbReference>
<dbReference type="PANTHER" id="PTHR16968:SF2">
    <property type="entry name" value="LENS EPITHELIAL CELL PROTEIN LEP503"/>
    <property type="match status" value="1"/>
</dbReference>
<dbReference type="Pfam" id="PF15221">
    <property type="entry name" value="LEP503"/>
    <property type="match status" value="1"/>
</dbReference>
<comment type="tissue specificity">
    <text>Preferentially expressed in the lens epithelial cells.</text>
</comment>
<accession>Q9WVB7</accession>
<accession>Q62699</accession>
<organism>
    <name type="scientific">Rattus norvegicus</name>
    <name type="common">Rat</name>
    <dbReference type="NCBI Taxonomy" id="10116"/>
    <lineage>
        <taxon>Eukaryota</taxon>
        <taxon>Metazoa</taxon>
        <taxon>Chordata</taxon>
        <taxon>Craniata</taxon>
        <taxon>Vertebrata</taxon>
        <taxon>Euteleostomi</taxon>
        <taxon>Mammalia</taxon>
        <taxon>Eutheria</taxon>
        <taxon>Euarchontoglires</taxon>
        <taxon>Glires</taxon>
        <taxon>Rodentia</taxon>
        <taxon>Myomorpha</taxon>
        <taxon>Muroidea</taxon>
        <taxon>Muridae</taxon>
        <taxon>Murinae</taxon>
        <taxon>Rattus</taxon>
    </lineage>
</organism>
<protein>
    <recommendedName>
        <fullName>Lens epithelial cell protein LEP503</fullName>
    </recommendedName>
</protein>
<name>LENEP_RAT</name>
<feature type="chain" id="PRO_0000084405" description="Lens epithelial cell protein LEP503">
    <location>
        <begin position="1"/>
        <end position="61"/>
    </location>
</feature>
<feature type="sequence conflict" description="In Ref. 1; AAA87067." evidence="1" ref="1">
    <original>Y</original>
    <variation>H</variation>
    <location>
        <position position="48"/>
    </location>
</feature>